<proteinExistence type="evidence at protein level"/>
<gene>
    <name evidence="5" type="primary">FLR1</name>
    <name evidence="6" type="synonym">FTM4</name>
    <name evidence="9" type="ordered locus">At3g12145</name>
    <name evidence="10" type="ORF">F28J15.19</name>
    <name evidence="11" type="ORF">T21B14.20</name>
</gene>
<feature type="chain" id="PRO_5010148311" description="Leucine-rich repeat protein FLOR 1">
    <location>
        <begin position="1"/>
        <end position="325"/>
    </location>
</feature>
<feature type="repeat" description="LRR 1" evidence="1">
    <location>
        <begin position="65"/>
        <end position="88"/>
    </location>
</feature>
<feature type="repeat" description="LRR 2" evidence="1">
    <location>
        <begin position="89"/>
        <end position="114"/>
    </location>
</feature>
<feature type="repeat" description="LRR 3" evidence="1">
    <location>
        <begin position="115"/>
        <end position="140"/>
    </location>
</feature>
<feature type="repeat" description="LRR 4" evidence="1">
    <location>
        <begin position="142"/>
        <end position="162"/>
    </location>
</feature>
<feature type="repeat" description="LRR 5" evidence="1">
    <location>
        <begin position="163"/>
        <end position="185"/>
    </location>
</feature>
<feature type="repeat" description="LRR 6" evidence="1">
    <location>
        <begin position="187"/>
        <end position="211"/>
    </location>
</feature>
<feature type="repeat" description="LRR 7" evidence="1">
    <location>
        <begin position="213"/>
        <end position="233"/>
    </location>
</feature>
<feature type="repeat" description="LRR 8" evidence="1">
    <location>
        <begin position="234"/>
        <end position="256"/>
    </location>
</feature>
<feature type="repeat" description="LRR 9" evidence="1">
    <location>
        <begin position="257"/>
        <end position="280"/>
    </location>
</feature>
<feature type="repeat" description="LRR 10" evidence="1">
    <location>
        <begin position="281"/>
        <end position="305"/>
    </location>
</feature>
<feature type="sequence conflict" description="In Ref. 1; AAF65195." evidence="7" ref="1">
    <original>S</original>
    <variation>N</variation>
    <location>
        <position position="23"/>
    </location>
</feature>
<feature type="sequence conflict" description="In Ref. 1; AA sequence." evidence="7" ref="1">
    <original>ISE</original>
    <variation>SQ</variation>
    <location>
        <begin position="135"/>
        <end position="137"/>
    </location>
</feature>
<feature type="sequence conflict" description="In Ref. 5; AAL15279." evidence="7" ref="5">
    <original>G</original>
    <variation>S</variation>
    <location>
        <position position="184"/>
    </location>
</feature>
<feature type="sequence conflict" description="In Ref. 1; AAF65195." evidence="7" ref="1">
    <location>
        <position position="252"/>
    </location>
</feature>
<protein>
    <recommendedName>
        <fullName evidence="5">Leucine-rich repeat protein FLOR 1</fullName>
    </recommendedName>
    <alternativeName>
        <fullName evidence="6">Protein FLORAL TRANSITION AT THE MERISTEM 4</fullName>
    </alternativeName>
</protein>
<reference key="1">
    <citation type="journal article" date="2001" name="Biochem. Biophys. Res. Commun.">
        <title>Floral transcription factor AGAMOUS interacts in vitro with a leucine-rich repeat and an acid phosphatase protein complex.</title>
        <authorList>
            <person name="Gamboa A."/>
            <person name="Paez-Valencia J."/>
            <person name="Acevedo G.F."/>
            <person name="Vazquez-Moreno L."/>
            <person name="Alvarez-Buylla R.E."/>
        </authorList>
    </citation>
    <scope>NUCLEOTIDE SEQUENCE [MRNA]</scope>
    <scope>PROTEIN SEQUENCE OF 124-139 AND 245-253</scope>
    <scope>INTERACTION WITH AG</scope>
    <scope>TISSUE SPECIFICITY</scope>
    <source>
        <strain>cv. Columbia</strain>
        <strain>cv. Landsberg erecta</strain>
        <tissue>Flower</tissue>
    </source>
</reference>
<reference key="2">
    <citation type="journal article" date="2000" name="DNA Res.">
        <title>Structural analysis of Arabidopsis thaliana chromosome 3. II. Sequence features of the 4,251,695 bp regions covered by 90 P1, TAC and BAC clones.</title>
        <authorList>
            <person name="Kaneko T."/>
            <person name="Katoh T."/>
            <person name="Sato S."/>
            <person name="Nakamura Y."/>
            <person name="Asamizu E."/>
            <person name="Tabata S."/>
        </authorList>
    </citation>
    <scope>NUCLEOTIDE SEQUENCE [LARGE SCALE GENOMIC DNA]</scope>
    <source>
        <strain>cv. Columbia</strain>
    </source>
</reference>
<reference key="3">
    <citation type="journal article" date="2000" name="Nature">
        <title>Sequence and analysis of chromosome 3 of the plant Arabidopsis thaliana.</title>
        <authorList>
            <person name="Salanoubat M."/>
            <person name="Lemcke K."/>
            <person name="Rieger M."/>
            <person name="Ansorge W."/>
            <person name="Unseld M."/>
            <person name="Fartmann B."/>
            <person name="Valle G."/>
            <person name="Bloecker H."/>
            <person name="Perez-Alonso M."/>
            <person name="Obermaier B."/>
            <person name="Delseny M."/>
            <person name="Boutry M."/>
            <person name="Grivell L.A."/>
            <person name="Mache R."/>
            <person name="Puigdomenech P."/>
            <person name="De Simone V."/>
            <person name="Choisne N."/>
            <person name="Artiguenave F."/>
            <person name="Robert C."/>
            <person name="Brottier P."/>
            <person name="Wincker P."/>
            <person name="Cattolico L."/>
            <person name="Weissenbach J."/>
            <person name="Saurin W."/>
            <person name="Quetier F."/>
            <person name="Schaefer M."/>
            <person name="Mueller-Auer S."/>
            <person name="Gabel C."/>
            <person name="Fuchs M."/>
            <person name="Benes V."/>
            <person name="Wurmbach E."/>
            <person name="Drzonek H."/>
            <person name="Erfle H."/>
            <person name="Jordan N."/>
            <person name="Bangert S."/>
            <person name="Wiedelmann R."/>
            <person name="Kranz H."/>
            <person name="Voss H."/>
            <person name="Holland R."/>
            <person name="Brandt P."/>
            <person name="Nyakatura G."/>
            <person name="Vezzi A."/>
            <person name="D'Angelo M."/>
            <person name="Pallavicini A."/>
            <person name="Toppo S."/>
            <person name="Simionati B."/>
            <person name="Conrad A."/>
            <person name="Hornischer K."/>
            <person name="Kauer G."/>
            <person name="Loehnert T.-H."/>
            <person name="Nordsiek G."/>
            <person name="Reichelt J."/>
            <person name="Scharfe M."/>
            <person name="Schoen O."/>
            <person name="Bargues M."/>
            <person name="Terol J."/>
            <person name="Climent J."/>
            <person name="Navarro P."/>
            <person name="Collado C."/>
            <person name="Perez-Perez A."/>
            <person name="Ottenwaelder B."/>
            <person name="Duchemin D."/>
            <person name="Cooke R."/>
            <person name="Laudie M."/>
            <person name="Berger-Llauro C."/>
            <person name="Purnelle B."/>
            <person name="Masuy D."/>
            <person name="de Haan M."/>
            <person name="Maarse A.C."/>
            <person name="Alcaraz J.-P."/>
            <person name="Cottet A."/>
            <person name="Casacuberta E."/>
            <person name="Monfort A."/>
            <person name="Argiriou A."/>
            <person name="Flores M."/>
            <person name="Liguori R."/>
            <person name="Vitale D."/>
            <person name="Mannhaupt G."/>
            <person name="Haase D."/>
            <person name="Schoof H."/>
            <person name="Rudd S."/>
            <person name="Zaccaria P."/>
            <person name="Mewes H.-W."/>
            <person name="Mayer K.F.X."/>
            <person name="Kaul S."/>
            <person name="Town C.D."/>
            <person name="Koo H.L."/>
            <person name="Tallon L.J."/>
            <person name="Jenkins J."/>
            <person name="Rooney T."/>
            <person name="Rizzo M."/>
            <person name="Walts A."/>
            <person name="Utterback T."/>
            <person name="Fujii C.Y."/>
            <person name="Shea T.P."/>
            <person name="Creasy T.H."/>
            <person name="Haas B."/>
            <person name="Maiti R."/>
            <person name="Wu D."/>
            <person name="Peterson J."/>
            <person name="Van Aken S."/>
            <person name="Pai G."/>
            <person name="Militscher J."/>
            <person name="Sellers P."/>
            <person name="Gill J.E."/>
            <person name="Feldblyum T.V."/>
            <person name="Preuss D."/>
            <person name="Lin X."/>
            <person name="Nierman W.C."/>
            <person name="Salzberg S.L."/>
            <person name="White O."/>
            <person name="Venter J.C."/>
            <person name="Fraser C.M."/>
            <person name="Kaneko T."/>
            <person name="Nakamura Y."/>
            <person name="Sato S."/>
            <person name="Kato T."/>
            <person name="Asamizu E."/>
            <person name="Sasamoto S."/>
            <person name="Kimura T."/>
            <person name="Idesawa K."/>
            <person name="Kawashima K."/>
            <person name="Kishida Y."/>
            <person name="Kiyokawa C."/>
            <person name="Kohara M."/>
            <person name="Matsumoto M."/>
            <person name="Matsuno A."/>
            <person name="Muraki A."/>
            <person name="Nakayama S."/>
            <person name="Nakazaki N."/>
            <person name="Shinpo S."/>
            <person name="Takeuchi C."/>
            <person name="Wada T."/>
            <person name="Watanabe A."/>
            <person name="Yamada M."/>
            <person name="Yasuda M."/>
            <person name="Tabata S."/>
        </authorList>
    </citation>
    <scope>NUCLEOTIDE SEQUENCE [LARGE SCALE GENOMIC DNA]</scope>
    <source>
        <strain>cv. Columbia</strain>
    </source>
</reference>
<reference key="4">
    <citation type="journal article" date="2017" name="Plant J.">
        <title>Araport11: a complete reannotation of the Arabidopsis thaliana reference genome.</title>
        <authorList>
            <person name="Cheng C.Y."/>
            <person name="Krishnakumar V."/>
            <person name="Chan A.P."/>
            <person name="Thibaud-Nissen F."/>
            <person name="Schobel S."/>
            <person name="Town C.D."/>
        </authorList>
    </citation>
    <scope>GENOME REANNOTATION</scope>
    <source>
        <strain>cv. Columbia</strain>
    </source>
</reference>
<reference key="5">
    <citation type="journal article" date="2003" name="Science">
        <title>Empirical analysis of transcriptional activity in the Arabidopsis genome.</title>
        <authorList>
            <person name="Yamada K."/>
            <person name="Lim J."/>
            <person name="Dale J.M."/>
            <person name="Chen H."/>
            <person name="Shinn P."/>
            <person name="Palm C.J."/>
            <person name="Southwick A.M."/>
            <person name="Wu H.C."/>
            <person name="Kim C.J."/>
            <person name="Nguyen M."/>
            <person name="Pham P.K."/>
            <person name="Cheuk R.F."/>
            <person name="Karlin-Newmann G."/>
            <person name="Liu S.X."/>
            <person name="Lam B."/>
            <person name="Sakano H."/>
            <person name="Wu T."/>
            <person name="Yu G."/>
            <person name="Miranda M."/>
            <person name="Quach H.L."/>
            <person name="Tripp M."/>
            <person name="Chang C.H."/>
            <person name="Lee J.M."/>
            <person name="Toriumi M.J."/>
            <person name="Chan M.M."/>
            <person name="Tang C.C."/>
            <person name="Onodera C.S."/>
            <person name="Deng J.M."/>
            <person name="Akiyama K."/>
            <person name="Ansari Y."/>
            <person name="Arakawa T."/>
            <person name="Banh J."/>
            <person name="Banno F."/>
            <person name="Bowser L."/>
            <person name="Brooks S.Y."/>
            <person name="Carninci P."/>
            <person name="Chao Q."/>
            <person name="Choy N."/>
            <person name="Enju A."/>
            <person name="Goldsmith A.D."/>
            <person name="Gurjal M."/>
            <person name="Hansen N.F."/>
            <person name="Hayashizaki Y."/>
            <person name="Johnson-Hopson C."/>
            <person name="Hsuan V.W."/>
            <person name="Iida K."/>
            <person name="Karnes M."/>
            <person name="Khan S."/>
            <person name="Koesema E."/>
            <person name="Ishida J."/>
            <person name="Jiang P.X."/>
            <person name="Jones T."/>
            <person name="Kawai J."/>
            <person name="Kamiya A."/>
            <person name="Meyers C."/>
            <person name="Nakajima M."/>
            <person name="Narusaka M."/>
            <person name="Seki M."/>
            <person name="Sakurai T."/>
            <person name="Satou M."/>
            <person name="Tamse R."/>
            <person name="Vaysberg M."/>
            <person name="Wallender E.K."/>
            <person name="Wong C."/>
            <person name="Yamamura Y."/>
            <person name="Yuan S."/>
            <person name="Shinozaki K."/>
            <person name="Davis R.W."/>
            <person name="Theologis A."/>
            <person name="Ecker J.R."/>
        </authorList>
    </citation>
    <scope>NUCLEOTIDE SEQUENCE [LARGE SCALE MRNA]</scope>
    <source>
        <strain>cv. Columbia</strain>
    </source>
</reference>
<reference key="6">
    <citation type="submission" date="2002-03" db="EMBL/GenBank/DDBJ databases">
        <title>Full-length cDNA from Arabidopsis thaliana.</title>
        <authorList>
            <person name="Brover V.V."/>
            <person name="Troukhan M.E."/>
            <person name="Alexandrov N.A."/>
            <person name="Lu Y.-P."/>
            <person name="Flavell R.B."/>
            <person name="Feldmann K.A."/>
        </authorList>
    </citation>
    <scope>NUCLEOTIDE SEQUENCE [LARGE SCALE MRNA]</scope>
</reference>
<reference key="7">
    <citation type="journal article" date="2004" name="Plant Sci.">
        <title>FLOR1, a putative interaction partner of the floral homeotic protein AGAMOUS, is a plant-specific intracellular LRR.</title>
        <authorList>
            <person name="Acevedo F.G."/>
            <person name="Gamboa A."/>
            <person name="Paez-Valencia J."/>
            <person name="Jimenez-Garcia L.F."/>
            <person name="Izaguirre-Sierra M."/>
            <person name="Alvarez-Buylla E.R."/>
        </authorList>
    </citation>
    <scope>TISSUE SPECIFICITY</scope>
    <scope>DEVELOPMENTAL STAGE</scope>
    <scope>SUBCELLULAR LOCATION</scope>
    <source>
        <strain>cv. Columbia</strain>
        <strain>cv. Landsberg erecta</strain>
    </source>
</reference>
<reference key="8">
    <citation type="journal article" date="2012" name="Plant Cell">
        <title>Analysis of the Arabidopsis shoot meristem transcriptome during floral transition identifies distinct regulatory patterns and a leucine-rich repeat protein that promotes flowering.</title>
        <authorList>
            <person name="Torti S."/>
            <person name="Fornara F."/>
            <person name="Vincent C."/>
            <person name="Andres F."/>
            <person name="Nordstrom K."/>
            <person name="Gobel U."/>
            <person name="Knoll D."/>
            <person name="Schoof H."/>
            <person name="Coupland G."/>
        </authorList>
    </citation>
    <scope>FUNCTION</scope>
    <scope>DISRUPTION PHENOTYPE</scope>
    <scope>DEVELOPMENTAL STAGE</scope>
    <scope>TISSUE SPECIFICITY</scope>
    <scope>INDUCTION BY LONG DAYS</scope>
    <source>
        <strain>cv. Columbia</strain>
        <strain>cv. Landsberg erecta</strain>
    </source>
</reference>
<name>FLOR1_ARATH</name>
<accession>Q9LH52</accession>
<accession>Q93ZC1</accession>
<accession>Q9C7D9</accession>
<accession>Q9M7E7</accession>
<evidence type="ECO:0000255" key="1"/>
<evidence type="ECO:0000269" key="2">
    <source>
    </source>
</evidence>
<evidence type="ECO:0000269" key="3">
    <source>
    </source>
</evidence>
<evidence type="ECO:0000269" key="4">
    <source ref="7"/>
</evidence>
<evidence type="ECO:0000303" key="5">
    <source>
    </source>
</evidence>
<evidence type="ECO:0000303" key="6">
    <source>
    </source>
</evidence>
<evidence type="ECO:0000305" key="7"/>
<evidence type="ECO:0000305" key="8">
    <source>
    </source>
</evidence>
<evidence type="ECO:0000312" key="9">
    <source>
        <dbReference type="Araport" id="AT3G12145"/>
    </source>
</evidence>
<evidence type="ECO:0000312" key="10">
    <source>
        <dbReference type="EMBL" id="AAG51067.1"/>
    </source>
</evidence>
<evidence type="ECO:0000312" key="11">
    <source>
        <dbReference type="EMBL" id="AEE75158.1"/>
    </source>
</evidence>
<dbReference type="EMBL" id="AF136588">
    <property type="protein sequence ID" value="AAF65195.1"/>
    <property type="molecule type" value="mRNA"/>
</dbReference>
<dbReference type="EMBL" id="AP002063">
    <property type="protein sequence ID" value="BAB01964.1"/>
    <property type="molecule type" value="Genomic_DNA"/>
</dbReference>
<dbReference type="EMBL" id="AC069472">
    <property type="protein sequence ID" value="AAG51067.1"/>
    <property type="status" value="ALT_SEQ"/>
    <property type="molecule type" value="Genomic_DNA"/>
</dbReference>
<dbReference type="EMBL" id="CP002686">
    <property type="protein sequence ID" value="AEE75158.1"/>
    <property type="molecule type" value="Genomic_DNA"/>
</dbReference>
<dbReference type="EMBL" id="AY057648">
    <property type="protein sequence ID" value="AAL15279.1"/>
    <property type="molecule type" value="mRNA"/>
</dbReference>
<dbReference type="EMBL" id="AY059802">
    <property type="protein sequence ID" value="AAL24284.1"/>
    <property type="molecule type" value="mRNA"/>
</dbReference>
<dbReference type="EMBL" id="BT001172">
    <property type="protein sequence ID" value="AAN65059.1"/>
    <property type="molecule type" value="mRNA"/>
</dbReference>
<dbReference type="EMBL" id="AY085937">
    <property type="protein sequence ID" value="AAM63148.1"/>
    <property type="molecule type" value="mRNA"/>
</dbReference>
<dbReference type="RefSeq" id="NP_974291.4">
    <property type="nucleotide sequence ID" value="NM_202562.5"/>
</dbReference>
<dbReference type="SMR" id="Q9LH52"/>
<dbReference type="FunCoup" id="Q9LH52">
    <property type="interactions" value="3"/>
</dbReference>
<dbReference type="STRING" id="3702.Q9LH52"/>
<dbReference type="PaxDb" id="3702-AT3G12145.1"/>
<dbReference type="ProteomicsDB" id="228971"/>
<dbReference type="EnsemblPlants" id="AT3G12145.1">
    <property type="protein sequence ID" value="AT3G12145.1"/>
    <property type="gene ID" value="AT3G12145"/>
</dbReference>
<dbReference type="GeneID" id="820391"/>
<dbReference type="Gramene" id="AT3G12145.1">
    <property type="protein sequence ID" value="AT3G12145.1"/>
    <property type="gene ID" value="AT3G12145"/>
</dbReference>
<dbReference type="KEGG" id="ath:AT3G12145"/>
<dbReference type="Araport" id="AT3G12145"/>
<dbReference type="TAIR" id="AT3G12145">
    <property type="gene designation" value="FLR1"/>
</dbReference>
<dbReference type="eggNOG" id="ENOG502SKQ2">
    <property type="taxonomic scope" value="Eukaryota"/>
</dbReference>
<dbReference type="HOGENOM" id="CLU_000288_18_22_1"/>
<dbReference type="InParanoid" id="Q9LH52"/>
<dbReference type="OMA" id="PRTDCCT"/>
<dbReference type="PhylomeDB" id="Q9LH52"/>
<dbReference type="PRO" id="PR:Q9LH52"/>
<dbReference type="Proteomes" id="UP000006548">
    <property type="component" value="Chromosome 3"/>
</dbReference>
<dbReference type="ExpressionAtlas" id="Q9LH52">
    <property type="expression patterns" value="baseline and differential"/>
</dbReference>
<dbReference type="GO" id="GO:0005737">
    <property type="term" value="C:cytoplasm"/>
    <property type="evidence" value="ECO:0000314"/>
    <property type="project" value="UniProtKB"/>
</dbReference>
<dbReference type="GO" id="GO:0005634">
    <property type="term" value="C:nucleus"/>
    <property type="evidence" value="ECO:0000314"/>
    <property type="project" value="UniProtKB"/>
</dbReference>
<dbReference type="GO" id="GO:0048471">
    <property type="term" value="C:perinuclear region of cytoplasm"/>
    <property type="evidence" value="ECO:0000314"/>
    <property type="project" value="UniProtKB"/>
</dbReference>
<dbReference type="GO" id="GO:0005886">
    <property type="term" value="C:plasma membrane"/>
    <property type="evidence" value="ECO:0000314"/>
    <property type="project" value="UniProtKB"/>
</dbReference>
<dbReference type="GO" id="GO:0048574">
    <property type="term" value="P:long-day photoperiodism, flowering"/>
    <property type="evidence" value="ECO:0000270"/>
    <property type="project" value="UniProtKB"/>
</dbReference>
<dbReference type="GO" id="GO:0048510">
    <property type="term" value="P:regulation of timing of transition from vegetative to reproductive phase"/>
    <property type="evidence" value="ECO:0000315"/>
    <property type="project" value="UniProtKB"/>
</dbReference>
<dbReference type="GO" id="GO:0010228">
    <property type="term" value="P:vegetative to reproductive phase transition of meristem"/>
    <property type="evidence" value="ECO:0000270"/>
    <property type="project" value="TAIR"/>
</dbReference>
<dbReference type="FunFam" id="3.80.10.10:FF:000348">
    <property type="entry name" value="Polygalacturonase inhibitor 1"/>
    <property type="match status" value="1"/>
</dbReference>
<dbReference type="Gene3D" id="3.80.10.10">
    <property type="entry name" value="Ribonuclease Inhibitor"/>
    <property type="match status" value="1"/>
</dbReference>
<dbReference type="InterPro" id="IPR001611">
    <property type="entry name" value="Leu-rich_rpt"/>
</dbReference>
<dbReference type="InterPro" id="IPR032675">
    <property type="entry name" value="LRR_dom_sf"/>
</dbReference>
<dbReference type="InterPro" id="IPR013210">
    <property type="entry name" value="LRR_N_plant-typ"/>
</dbReference>
<dbReference type="InterPro" id="IPR051848">
    <property type="entry name" value="PGIP"/>
</dbReference>
<dbReference type="PANTHER" id="PTHR48059:SF25">
    <property type="entry name" value="LEUCINE-RICH REPEAT PROTEIN FLOR 1"/>
    <property type="match status" value="1"/>
</dbReference>
<dbReference type="PANTHER" id="PTHR48059">
    <property type="entry name" value="POLYGALACTURONASE INHIBITOR 1"/>
    <property type="match status" value="1"/>
</dbReference>
<dbReference type="Pfam" id="PF00560">
    <property type="entry name" value="LRR_1"/>
    <property type="match status" value="6"/>
</dbReference>
<dbReference type="Pfam" id="PF08263">
    <property type="entry name" value="LRRNT_2"/>
    <property type="match status" value="1"/>
</dbReference>
<dbReference type="SUPFAM" id="SSF52058">
    <property type="entry name" value="L domain-like"/>
    <property type="match status" value="1"/>
</dbReference>
<sequence length="325" mass="35808">MKLFVHLSIFFSILFITLPSSYSCTENDKNALLQIKKALGNPPLLSSWNPRTDCCTGWTGVECTNRRVTGLSVTSGEVSGQISYQIGDLVDLRTLDFSYLPHLTGNIPRTITKLKNLNTLYLKHTSLSGPIPDYISELKSLTFLDLSFNQFTGPIPGSLSQMPKLEAIQINDNKLTGSIPNSFGSFVGNVPNLYLSNNKLSGKIPESLSKYDFNAVDLSGNGFEGDAFMFFGRNKTTVRVDLSRNMFNFDLVKVKFARSIVSLDLSQNHIYGKIPPALTKLHLEHFNVSDNHLCGKIPSGGLLQTFEPSAFAHNICLCGTPLKAC</sequence>
<organism>
    <name type="scientific">Arabidopsis thaliana</name>
    <name type="common">Mouse-ear cress</name>
    <dbReference type="NCBI Taxonomy" id="3702"/>
    <lineage>
        <taxon>Eukaryota</taxon>
        <taxon>Viridiplantae</taxon>
        <taxon>Streptophyta</taxon>
        <taxon>Embryophyta</taxon>
        <taxon>Tracheophyta</taxon>
        <taxon>Spermatophyta</taxon>
        <taxon>Magnoliopsida</taxon>
        <taxon>eudicotyledons</taxon>
        <taxon>Gunneridae</taxon>
        <taxon>Pentapetalae</taxon>
        <taxon>rosids</taxon>
        <taxon>malvids</taxon>
        <taxon>Brassicales</taxon>
        <taxon>Brassicaceae</taxon>
        <taxon>Camelineae</taxon>
        <taxon>Arabidopsis</taxon>
    </lineage>
</organism>
<comment type="function">
    <text evidence="3">Promotes flowering transition in long days (LD).</text>
</comment>
<comment type="subunit">
    <text evidence="2">Interacts with MADS domain transcription factors during flower development. Component of a complex made of FLOR1, VSP1 and AGAMOUS (AG). Binds directly with AG.</text>
</comment>
<comment type="subcellular location">
    <subcellularLocation>
        <location evidence="4">Cytoplasm</location>
    </subcellularLocation>
    <subcellularLocation>
        <location evidence="4">Nucleus</location>
    </subcellularLocation>
    <subcellularLocation>
        <location evidence="4">Cytoplasm</location>
        <location evidence="4">Perinuclear region</location>
    </subcellularLocation>
    <subcellularLocation>
        <location evidence="4">Cell membrane</location>
    </subcellularLocation>
    <text evidence="4">In carpels, observed both in cytoplasm and nucleus, as well as in the perinuclear and cell membrane in a vesicle-like pattern. In style cells, present in cytoplasm as well as in nucleus possibly in the perinuclear membrane. In leaf tissue, observed in the plasma membrane and in the perinuclear membrane. In roots and tapetum cells, restricted to the cytoplasm.</text>
</comment>
<comment type="tissue specificity">
    <text evidence="2 3 4">Confined to flowers and inflorescences (e.g. inflorescence meristems, floral meristems, stamens and carpels).</text>
</comment>
<comment type="developmental stage">
    <text evidence="3 4">Induced in the early inflorescence meristem (PubMed:22319055). First present when floral induction occurs in inflorescence and floral meristems. Strongly expressed upon flower induction in inflorescence meristems along two lateral strips on the L3 of the flank meristem, where flower primordia are initiated. In the L3 of the central initiation zone, also present at lower levels. Accumulates at high levels in the L3 of stages 1-4 of flower meristems. In developing flowers, detected from stage 3. By stages 7 and 8, specifically observed in stamen and gynoecium primordia. In stamens, restricted to the anthers, probably to the endothecium, tapetum and the middle layer. In carpels, first uniformly expressed in carpel primordia, but later restricted to the placentae, the funiculus and to the inner and outer integuments (PubMed:22319055, Ref.7).</text>
</comment>
<comment type="induction">
    <text evidence="3">By shift to long days (LD).</text>
</comment>
<comment type="disruption phenotype">
    <text evidence="3">Delayed flowering.</text>
</comment>
<comment type="miscellaneous">
    <text evidence="8">'Flor' means flower in Spanish.</text>
</comment>
<comment type="similarity">
    <text evidence="7">Belongs to the polygalacturonase-inhibiting protein family.</text>
</comment>
<comment type="sequence caution" evidence="7">
    <conflict type="erroneous gene model prediction">
        <sequence resource="EMBL-CDS" id="AAG51067"/>
    </conflict>
</comment>
<keyword id="KW-1003">Cell membrane</keyword>
<keyword id="KW-0963">Cytoplasm</keyword>
<keyword id="KW-0903">Direct protein sequencing</keyword>
<keyword id="KW-0433">Leucine-rich repeat</keyword>
<keyword id="KW-0472">Membrane</keyword>
<keyword id="KW-0539">Nucleus</keyword>
<keyword id="KW-1185">Reference proteome</keyword>
<keyword id="KW-0677">Repeat</keyword>